<reference key="1">
    <citation type="submission" date="2008-04" db="EMBL/GenBank/DDBJ databases">
        <title>Complete sequence of chromosome 1 of Burkholderia ambifaria MC40-6.</title>
        <authorList>
            <person name="Copeland A."/>
            <person name="Lucas S."/>
            <person name="Lapidus A."/>
            <person name="Glavina del Rio T."/>
            <person name="Dalin E."/>
            <person name="Tice H."/>
            <person name="Pitluck S."/>
            <person name="Chain P."/>
            <person name="Malfatti S."/>
            <person name="Shin M."/>
            <person name="Vergez L."/>
            <person name="Lang D."/>
            <person name="Schmutz J."/>
            <person name="Larimer F."/>
            <person name="Land M."/>
            <person name="Hauser L."/>
            <person name="Kyrpides N."/>
            <person name="Lykidis A."/>
            <person name="Ramette A."/>
            <person name="Konstantinidis K."/>
            <person name="Tiedje J."/>
            <person name="Richardson P."/>
        </authorList>
    </citation>
    <scope>NUCLEOTIDE SEQUENCE [LARGE SCALE GENOMIC DNA]</scope>
    <source>
        <strain>MC40-6</strain>
    </source>
</reference>
<comment type="function">
    <text evidence="1">Attaches a formyl group to the free amino group of methionyl-tRNA(fMet). The formyl group appears to play a dual role in the initiator identity of N-formylmethionyl-tRNA by promoting its recognition by IF2 and preventing the misappropriation of this tRNA by the elongation apparatus.</text>
</comment>
<comment type="catalytic activity">
    <reaction evidence="1">
        <text>L-methionyl-tRNA(fMet) + (6R)-10-formyltetrahydrofolate = N-formyl-L-methionyl-tRNA(fMet) + (6S)-5,6,7,8-tetrahydrofolate + H(+)</text>
        <dbReference type="Rhea" id="RHEA:24380"/>
        <dbReference type="Rhea" id="RHEA-COMP:9952"/>
        <dbReference type="Rhea" id="RHEA-COMP:9953"/>
        <dbReference type="ChEBI" id="CHEBI:15378"/>
        <dbReference type="ChEBI" id="CHEBI:57453"/>
        <dbReference type="ChEBI" id="CHEBI:78530"/>
        <dbReference type="ChEBI" id="CHEBI:78844"/>
        <dbReference type="ChEBI" id="CHEBI:195366"/>
        <dbReference type="EC" id="2.1.2.9"/>
    </reaction>
</comment>
<comment type="similarity">
    <text evidence="1">Belongs to the Fmt family.</text>
</comment>
<organism>
    <name type="scientific">Burkholderia ambifaria (strain MC40-6)</name>
    <dbReference type="NCBI Taxonomy" id="398577"/>
    <lineage>
        <taxon>Bacteria</taxon>
        <taxon>Pseudomonadati</taxon>
        <taxon>Pseudomonadota</taxon>
        <taxon>Betaproteobacteria</taxon>
        <taxon>Burkholderiales</taxon>
        <taxon>Burkholderiaceae</taxon>
        <taxon>Burkholderia</taxon>
        <taxon>Burkholderia cepacia complex</taxon>
    </lineage>
</organism>
<feature type="chain" id="PRO_1000098383" description="Methionyl-tRNA formyltransferase">
    <location>
        <begin position="1"/>
        <end position="327"/>
    </location>
</feature>
<feature type="binding site" evidence="1">
    <location>
        <begin position="121"/>
        <end position="124"/>
    </location>
    <ligand>
        <name>(6S)-5,6,7,8-tetrahydrofolate</name>
        <dbReference type="ChEBI" id="CHEBI:57453"/>
    </ligand>
</feature>
<evidence type="ECO:0000255" key="1">
    <source>
        <dbReference type="HAMAP-Rule" id="MF_00182"/>
    </source>
</evidence>
<accession>B1YPX6</accession>
<gene>
    <name evidence="1" type="primary">fmt</name>
    <name type="ordered locus">BamMC406_3064</name>
</gene>
<name>FMT_BURA4</name>
<protein>
    <recommendedName>
        <fullName evidence="1">Methionyl-tRNA formyltransferase</fullName>
        <ecNumber evidence="1">2.1.2.9</ecNumber>
    </recommendedName>
</protein>
<proteinExistence type="inferred from homology"/>
<dbReference type="EC" id="2.1.2.9" evidence="1"/>
<dbReference type="EMBL" id="CP001025">
    <property type="protein sequence ID" value="ACB65540.1"/>
    <property type="molecule type" value="Genomic_DNA"/>
</dbReference>
<dbReference type="RefSeq" id="WP_012365001.1">
    <property type="nucleotide sequence ID" value="NC_010551.1"/>
</dbReference>
<dbReference type="SMR" id="B1YPX6"/>
<dbReference type="KEGG" id="bac:BamMC406_3064"/>
<dbReference type="HOGENOM" id="CLU_033347_1_2_4"/>
<dbReference type="OrthoDB" id="9802815at2"/>
<dbReference type="Proteomes" id="UP000001680">
    <property type="component" value="Chromosome 1"/>
</dbReference>
<dbReference type="GO" id="GO:0005829">
    <property type="term" value="C:cytosol"/>
    <property type="evidence" value="ECO:0007669"/>
    <property type="project" value="TreeGrafter"/>
</dbReference>
<dbReference type="GO" id="GO:0004479">
    <property type="term" value="F:methionyl-tRNA formyltransferase activity"/>
    <property type="evidence" value="ECO:0007669"/>
    <property type="project" value="UniProtKB-UniRule"/>
</dbReference>
<dbReference type="CDD" id="cd08646">
    <property type="entry name" value="FMT_core_Met-tRNA-FMT_N"/>
    <property type="match status" value="1"/>
</dbReference>
<dbReference type="CDD" id="cd08704">
    <property type="entry name" value="Met_tRNA_FMT_C"/>
    <property type="match status" value="1"/>
</dbReference>
<dbReference type="Gene3D" id="3.10.25.10">
    <property type="entry name" value="Formyl transferase, C-terminal domain"/>
    <property type="match status" value="1"/>
</dbReference>
<dbReference type="Gene3D" id="3.40.50.170">
    <property type="entry name" value="Formyl transferase, N-terminal domain"/>
    <property type="match status" value="1"/>
</dbReference>
<dbReference type="HAMAP" id="MF_00182">
    <property type="entry name" value="Formyl_trans"/>
    <property type="match status" value="1"/>
</dbReference>
<dbReference type="InterPro" id="IPR005794">
    <property type="entry name" value="Fmt"/>
</dbReference>
<dbReference type="InterPro" id="IPR005793">
    <property type="entry name" value="Formyl_trans_C"/>
</dbReference>
<dbReference type="InterPro" id="IPR037022">
    <property type="entry name" value="Formyl_trans_C_sf"/>
</dbReference>
<dbReference type="InterPro" id="IPR002376">
    <property type="entry name" value="Formyl_transf_N"/>
</dbReference>
<dbReference type="InterPro" id="IPR036477">
    <property type="entry name" value="Formyl_transf_N_sf"/>
</dbReference>
<dbReference type="InterPro" id="IPR011034">
    <property type="entry name" value="Formyl_transferase-like_C_sf"/>
</dbReference>
<dbReference type="InterPro" id="IPR001555">
    <property type="entry name" value="GART_AS"/>
</dbReference>
<dbReference type="InterPro" id="IPR044135">
    <property type="entry name" value="Met-tRNA-FMT_C"/>
</dbReference>
<dbReference type="InterPro" id="IPR041711">
    <property type="entry name" value="Met-tRNA-FMT_N"/>
</dbReference>
<dbReference type="NCBIfam" id="TIGR00460">
    <property type="entry name" value="fmt"/>
    <property type="match status" value="1"/>
</dbReference>
<dbReference type="PANTHER" id="PTHR11138">
    <property type="entry name" value="METHIONYL-TRNA FORMYLTRANSFERASE"/>
    <property type="match status" value="1"/>
</dbReference>
<dbReference type="PANTHER" id="PTHR11138:SF5">
    <property type="entry name" value="METHIONYL-TRNA FORMYLTRANSFERASE, MITOCHONDRIAL"/>
    <property type="match status" value="1"/>
</dbReference>
<dbReference type="Pfam" id="PF02911">
    <property type="entry name" value="Formyl_trans_C"/>
    <property type="match status" value="1"/>
</dbReference>
<dbReference type="Pfam" id="PF00551">
    <property type="entry name" value="Formyl_trans_N"/>
    <property type="match status" value="1"/>
</dbReference>
<dbReference type="SUPFAM" id="SSF50486">
    <property type="entry name" value="FMT C-terminal domain-like"/>
    <property type="match status" value="1"/>
</dbReference>
<dbReference type="SUPFAM" id="SSF53328">
    <property type="entry name" value="Formyltransferase"/>
    <property type="match status" value="1"/>
</dbReference>
<dbReference type="PROSITE" id="PS00373">
    <property type="entry name" value="GART"/>
    <property type="match status" value="1"/>
</dbReference>
<sequence>MTHTLRVIFAGTPEFAAAALAAIHEAGFPVPLVLTQPDRPAGRGMKLQASAVKRYAVEHGIPVAQPPSLRRAGKYPGEAADAIELLRTTPHDVMVVAAYGLLLPQEVLDIPRAGCINIHASLLPRWRGAAPIHRAIEAGDAETGVTLMQMDVGLDTGAMIEEARVAIAPDDTTATLHDRLAADGARLIVDALVRLERDGALPATPQPADGVTYAEKIGKHEAALDWRKPADVLARQVRAFDPFPGGVATLDGAAIKLWAAEPVAARGDAVPGTIVDAAPEGVIVACGSGALRVTQLQKPGGKRLPAREFLAGSPLAAGQRFALPDGA</sequence>
<keyword id="KW-0648">Protein biosynthesis</keyword>
<keyword id="KW-0808">Transferase</keyword>